<organism>
    <name type="scientific">Bubalus bubalis</name>
    <name type="common">Domestic water buffalo</name>
    <dbReference type="NCBI Taxonomy" id="89462"/>
    <lineage>
        <taxon>Eukaryota</taxon>
        <taxon>Metazoa</taxon>
        <taxon>Chordata</taxon>
        <taxon>Craniata</taxon>
        <taxon>Vertebrata</taxon>
        <taxon>Euteleostomi</taxon>
        <taxon>Mammalia</taxon>
        <taxon>Eutheria</taxon>
        <taxon>Laurasiatheria</taxon>
        <taxon>Artiodactyla</taxon>
        <taxon>Ruminantia</taxon>
        <taxon>Pecora</taxon>
        <taxon>Bovidae</taxon>
        <taxon>Bovinae</taxon>
        <taxon>Bubalus</taxon>
    </lineage>
</organism>
<gene>
    <name type="primary">HBB</name>
</gene>
<proteinExistence type="evidence at protein level"/>
<evidence type="ECO:0000250" key="1">
    <source>
        <dbReference type="UniProtKB" id="P68871"/>
    </source>
</evidence>
<evidence type="ECO:0000255" key="2">
    <source>
        <dbReference type="PROSITE-ProRule" id="PRU00238"/>
    </source>
</evidence>
<evidence type="ECO:0007829" key="3">
    <source>
        <dbReference type="PDB" id="3CY5"/>
    </source>
</evidence>
<keyword id="KW-0002">3D-structure</keyword>
<keyword id="KW-0007">Acetylation</keyword>
<keyword id="KW-0903">Direct protein sequencing</keyword>
<keyword id="KW-0349">Heme</keyword>
<keyword id="KW-0408">Iron</keyword>
<keyword id="KW-0479">Metal-binding</keyword>
<keyword id="KW-0561">Oxygen transport</keyword>
<keyword id="KW-0597">Phosphoprotein</keyword>
<keyword id="KW-0702">S-nitrosylation</keyword>
<keyword id="KW-0813">Transport</keyword>
<reference key="1">
    <citation type="journal article" date="1992" name="Comp. Biochem. Physiol.">
        <title>River buffalo (Bubalus bubalis L.) AA phenotype haemoglobins: characterization by immobiline polyacrylamide gel electrophoresis and high performance liquid chromatography and determination of the primary structure of the constitutive chains by mass spectrometry.</title>
        <authorList>
            <person name="Ferranti P."/>
            <person name="di Luccia A."/>
            <person name="Malorni A."/>
            <person name="Pucci P."/>
            <person name="Ruoppolo M."/>
            <person name="Marino G."/>
            <person name="Ferrara L."/>
        </authorList>
    </citation>
    <scope>PROTEIN SEQUENCE</scope>
</reference>
<sequence length="145" mass="15986">MLTAEEKAAVTAFWGKVHVDEVGGEALGRLLVVYPWTQRFFESFGDLSTADAVMNNPKVKAHGKKVLDSFSNGMKHLDDLKGTFAALSELHCDKLHVDPENFKLLGNVLVVVLARHFGKEFTPVLQADFQKVVAGVANALAHRYH</sequence>
<dbReference type="PIR" id="B58794">
    <property type="entry name" value="B58794"/>
</dbReference>
<dbReference type="PDB" id="3CY5">
    <property type="method" value="X-ray"/>
    <property type="resolution" value="2.00 A"/>
    <property type="chains" value="B/D=1-145"/>
</dbReference>
<dbReference type="PDBsum" id="3CY5"/>
<dbReference type="SMR" id="P67820"/>
<dbReference type="EvolutionaryTrace" id="P67820"/>
<dbReference type="GO" id="GO:0072562">
    <property type="term" value="C:blood microparticle"/>
    <property type="evidence" value="ECO:0007669"/>
    <property type="project" value="TreeGrafter"/>
</dbReference>
<dbReference type="GO" id="GO:0031838">
    <property type="term" value="C:haptoglobin-hemoglobin complex"/>
    <property type="evidence" value="ECO:0007669"/>
    <property type="project" value="TreeGrafter"/>
</dbReference>
<dbReference type="GO" id="GO:0005833">
    <property type="term" value="C:hemoglobin complex"/>
    <property type="evidence" value="ECO:0007669"/>
    <property type="project" value="InterPro"/>
</dbReference>
<dbReference type="GO" id="GO:0031720">
    <property type="term" value="F:haptoglobin binding"/>
    <property type="evidence" value="ECO:0007669"/>
    <property type="project" value="TreeGrafter"/>
</dbReference>
<dbReference type="GO" id="GO:0020037">
    <property type="term" value="F:heme binding"/>
    <property type="evidence" value="ECO:0007669"/>
    <property type="project" value="InterPro"/>
</dbReference>
<dbReference type="GO" id="GO:0031721">
    <property type="term" value="F:hemoglobin alpha binding"/>
    <property type="evidence" value="ECO:0007669"/>
    <property type="project" value="TreeGrafter"/>
</dbReference>
<dbReference type="GO" id="GO:0046872">
    <property type="term" value="F:metal ion binding"/>
    <property type="evidence" value="ECO:0007669"/>
    <property type="project" value="UniProtKB-KW"/>
</dbReference>
<dbReference type="GO" id="GO:0043177">
    <property type="term" value="F:organic acid binding"/>
    <property type="evidence" value="ECO:0007669"/>
    <property type="project" value="TreeGrafter"/>
</dbReference>
<dbReference type="GO" id="GO:0019825">
    <property type="term" value="F:oxygen binding"/>
    <property type="evidence" value="ECO:0007669"/>
    <property type="project" value="InterPro"/>
</dbReference>
<dbReference type="GO" id="GO:0005344">
    <property type="term" value="F:oxygen carrier activity"/>
    <property type="evidence" value="ECO:0007669"/>
    <property type="project" value="UniProtKB-KW"/>
</dbReference>
<dbReference type="GO" id="GO:0004601">
    <property type="term" value="F:peroxidase activity"/>
    <property type="evidence" value="ECO:0007669"/>
    <property type="project" value="TreeGrafter"/>
</dbReference>
<dbReference type="GO" id="GO:0042744">
    <property type="term" value="P:hydrogen peroxide catabolic process"/>
    <property type="evidence" value="ECO:0007669"/>
    <property type="project" value="TreeGrafter"/>
</dbReference>
<dbReference type="CDD" id="cd08925">
    <property type="entry name" value="Hb-beta-like"/>
    <property type="match status" value="1"/>
</dbReference>
<dbReference type="FunFam" id="1.10.490.10:FF:000001">
    <property type="entry name" value="Hemoglobin subunit beta"/>
    <property type="match status" value="1"/>
</dbReference>
<dbReference type="Gene3D" id="1.10.490.10">
    <property type="entry name" value="Globins"/>
    <property type="match status" value="1"/>
</dbReference>
<dbReference type="InterPro" id="IPR000971">
    <property type="entry name" value="Globin"/>
</dbReference>
<dbReference type="InterPro" id="IPR009050">
    <property type="entry name" value="Globin-like_sf"/>
</dbReference>
<dbReference type="InterPro" id="IPR012292">
    <property type="entry name" value="Globin/Proto"/>
</dbReference>
<dbReference type="InterPro" id="IPR002337">
    <property type="entry name" value="Hemoglobin_b"/>
</dbReference>
<dbReference type="InterPro" id="IPR050056">
    <property type="entry name" value="Hemoglobin_oxygen_transport"/>
</dbReference>
<dbReference type="PANTHER" id="PTHR11442">
    <property type="entry name" value="HEMOGLOBIN FAMILY MEMBER"/>
    <property type="match status" value="1"/>
</dbReference>
<dbReference type="PANTHER" id="PTHR11442:SF42">
    <property type="entry name" value="HEMOGLOBIN SUBUNIT BETA"/>
    <property type="match status" value="1"/>
</dbReference>
<dbReference type="Pfam" id="PF00042">
    <property type="entry name" value="Globin"/>
    <property type="match status" value="1"/>
</dbReference>
<dbReference type="PRINTS" id="PR00814">
    <property type="entry name" value="BETAHAEM"/>
</dbReference>
<dbReference type="SUPFAM" id="SSF46458">
    <property type="entry name" value="Globin-like"/>
    <property type="match status" value="1"/>
</dbReference>
<dbReference type="PROSITE" id="PS01033">
    <property type="entry name" value="GLOBIN"/>
    <property type="match status" value="1"/>
</dbReference>
<feature type="chain" id="PRO_0000052898" description="Hemoglobin subunit beta">
    <location>
        <begin position="1"/>
        <end position="145"/>
    </location>
</feature>
<feature type="domain" description="Globin" evidence="2">
    <location>
        <begin position="1"/>
        <end position="145"/>
    </location>
</feature>
<feature type="binding site" description="distal binding residue">
    <location>
        <position position="62"/>
    </location>
    <ligand>
        <name>heme b</name>
        <dbReference type="ChEBI" id="CHEBI:60344"/>
    </ligand>
    <ligandPart>
        <name>Fe</name>
        <dbReference type="ChEBI" id="CHEBI:18248"/>
    </ligandPart>
</feature>
<feature type="binding site" description="proximal binding residue">
    <location>
        <position position="91"/>
    </location>
    <ligand>
        <name>heme b</name>
        <dbReference type="ChEBI" id="CHEBI:60344"/>
    </ligand>
    <ligandPart>
        <name>Fe</name>
        <dbReference type="ChEBI" id="CHEBI:18248"/>
    </ligandPart>
</feature>
<feature type="modified residue" description="Phosphothreonine" evidence="1">
    <location>
        <position position="11"/>
    </location>
</feature>
<feature type="modified residue" description="Phosphoserine" evidence="1">
    <location>
        <position position="43"/>
    </location>
</feature>
<feature type="modified residue" description="N6-acetyllysine" evidence="1">
    <location>
        <position position="58"/>
    </location>
</feature>
<feature type="modified residue" description="N6-acetyllysine" evidence="1">
    <location>
        <position position="81"/>
    </location>
</feature>
<feature type="modified residue" description="S-nitrosocysteine" evidence="1">
    <location>
        <position position="92"/>
    </location>
</feature>
<feature type="helix" evidence="3">
    <location>
        <begin position="4"/>
        <end position="16"/>
    </location>
</feature>
<feature type="helix" evidence="3">
    <location>
        <begin position="19"/>
        <end position="33"/>
    </location>
</feature>
<feature type="helix" evidence="3">
    <location>
        <begin position="35"/>
        <end position="40"/>
    </location>
</feature>
<feature type="helix" evidence="3">
    <location>
        <begin position="42"/>
        <end position="44"/>
    </location>
</feature>
<feature type="helix" evidence="3">
    <location>
        <begin position="50"/>
        <end position="54"/>
    </location>
</feature>
<feature type="helix" evidence="3">
    <location>
        <begin position="57"/>
        <end position="75"/>
    </location>
</feature>
<feature type="helix" evidence="3">
    <location>
        <begin position="80"/>
        <end position="83"/>
    </location>
</feature>
<feature type="helix" evidence="3">
    <location>
        <begin position="85"/>
        <end position="93"/>
    </location>
</feature>
<feature type="helix" evidence="3">
    <location>
        <begin position="100"/>
        <end position="117"/>
    </location>
</feature>
<feature type="helix" evidence="3">
    <location>
        <begin position="118"/>
        <end position="120"/>
    </location>
</feature>
<feature type="helix" evidence="3">
    <location>
        <begin position="123"/>
        <end position="140"/>
    </location>
</feature>
<feature type="helix" evidence="3">
    <location>
        <begin position="142"/>
        <end position="144"/>
    </location>
</feature>
<comment type="function">
    <text>Involved in oxygen transport from the lung to the various peripheral tissues.</text>
</comment>
<comment type="subunit">
    <text>Heterotetramer of two alpha chains and two beta chains.</text>
</comment>
<comment type="tissue specificity">
    <text>Red blood cells.</text>
</comment>
<comment type="similarity">
    <text evidence="2">Belongs to the globin family.</text>
</comment>
<accession>P67820</accession>
<accession>P02071</accession>
<protein>
    <recommendedName>
        <fullName>Hemoglobin subunit beta</fullName>
    </recommendedName>
    <alternativeName>
        <fullName>Beta-globin</fullName>
    </alternativeName>
    <alternativeName>
        <fullName>Hemoglobin beta chain</fullName>
    </alternativeName>
</protein>
<name>HBB_BUBBU</name>